<reference key="1">
    <citation type="journal article" date="2004" name="Nat. Genet.">
        <title>Comparison of genome degradation in Paratyphi A and Typhi, human-restricted serovars of Salmonella enterica that cause typhoid.</title>
        <authorList>
            <person name="McClelland M."/>
            <person name="Sanderson K.E."/>
            <person name="Clifton S.W."/>
            <person name="Latreille P."/>
            <person name="Porwollik S."/>
            <person name="Sabo A."/>
            <person name="Meyer R."/>
            <person name="Bieri T."/>
            <person name="Ozersky P."/>
            <person name="McLellan M."/>
            <person name="Harkins C.R."/>
            <person name="Wang C."/>
            <person name="Nguyen C."/>
            <person name="Berghoff A."/>
            <person name="Elliott G."/>
            <person name="Kohlberg S."/>
            <person name="Strong C."/>
            <person name="Du F."/>
            <person name="Carter J."/>
            <person name="Kremizki C."/>
            <person name="Layman D."/>
            <person name="Leonard S."/>
            <person name="Sun H."/>
            <person name="Fulton L."/>
            <person name="Nash W."/>
            <person name="Miner T."/>
            <person name="Minx P."/>
            <person name="Delehaunty K."/>
            <person name="Fronick C."/>
            <person name="Magrini V."/>
            <person name="Nhan M."/>
            <person name="Warren W."/>
            <person name="Florea L."/>
            <person name="Spieth J."/>
            <person name="Wilson R.K."/>
        </authorList>
    </citation>
    <scope>NUCLEOTIDE SEQUENCE [LARGE SCALE GENOMIC DNA]</scope>
    <source>
        <strain>ATCC 9150 / SARB42</strain>
    </source>
</reference>
<organism>
    <name type="scientific">Salmonella paratyphi A (strain ATCC 9150 / SARB42)</name>
    <dbReference type="NCBI Taxonomy" id="295319"/>
    <lineage>
        <taxon>Bacteria</taxon>
        <taxon>Pseudomonadati</taxon>
        <taxon>Pseudomonadota</taxon>
        <taxon>Gammaproteobacteria</taxon>
        <taxon>Enterobacterales</taxon>
        <taxon>Enterobacteriaceae</taxon>
        <taxon>Salmonella</taxon>
    </lineage>
</organism>
<gene>
    <name evidence="1" type="primary">leuA</name>
    <name type="ordered locus">SPA0115</name>
</gene>
<protein>
    <recommendedName>
        <fullName evidence="1">2-isopropylmalate synthase</fullName>
        <ecNumber evidence="1">2.3.3.13</ecNumber>
    </recommendedName>
    <alternativeName>
        <fullName evidence="1">Alpha-IPM synthase</fullName>
    </alternativeName>
    <alternativeName>
        <fullName evidence="1">Alpha-isopropylmalate synthase</fullName>
    </alternativeName>
</protein>
<proteinExistence type="inferred from homology"/>
<sequence length="523" mass="57463">MSQQVIIFDTTLRDGEQALQASLSAKEKLQIALALERMGVDVMEVGFPVSSPGDFESVQTIARTIKNSRVCALARCVEKDIDVAAQALKVADAFRIHTFIATSPMHIATKLRSTLDEVIERAVYMVKRARNYTDDVEFSCEDAGRTPVDDLARVVEAAINAGARTINIPDTVGYTMPFEFAGIISGLYERVPNIDKAIISVHTHDDLGIAVGNSLAAVHAGARQVEGAMNGIGERAGNCALEEVIMAIKVRKDIMNVHTNINHHEIWRTSQTVSQICNMPIPANKAIVGSGAFAHSSGIHQDGVLKNRENYEIMTPESIGLNQIQLNLTSRSGRAAVKHRMEEMGYKDTDYNMDHLYDAFLKLADKKGQVFDYDLEALAFINKQQEEPEHFRLDYFSVQSGSSDIATASVKLACGEEIKAEAANGNGPVDAIYQAINRITGYDVELVKYDLNAKGQGKDALGQVDIVVNHHGRRFHGVGLATDIVESSAKAMMHVLNNIWRAAEVEKELQRKAQNKENNKETV</sequence>
<comment type="function">
    <text evidence="1">Catalyzes the condensation of the acetyl group of acetyl-CoA with 3-methyl-2-oxobutanoate (2-ketoisovalerate) to form 3-carboxy-3-hydroxy-4-methylpentanoate (2-isopropylmalate).</text>
</comment>
<comment type="catalytic activity">
    <reaction evidence="1">
        <text>3-methyl-2-oxobutanoate + acetyl-CoA + H2O = (2S)-2-isopropylmalate + CoA + H(+)</text>
        <dbReference type="Rhea" id="RHEA:21524"/>
        <dbReference type="ChEBI" id="CHEBI:1178"/>
        <dbReference type="ChEBI" id="CHEBI:11851"/>
        <dbReference type="ChEBI" id="CHEBI:15377"/>
        <dbReference type="ChEBI" id="CHEBI:15378"/>
        <dbReference type="ChEBI" id="CHEBI:57287"/>
        <dbReference type="ChEBI" id="CHEBI:57288"/>
        <dbReference type="EC" id="2.3.3.13"/>
    </reaction>
</comment>
<comment type="cofactor">
    <cofactor evidence="1">
        <name>Mn(2+)</name>
        <dbReference type="ChEBI" id="CHEBI:29035"/>
    </cofactor>
</comment>
<comment type="pathway">
    <text evidence="1">Amino-acid biosynthesis; L-leucine biosynthesis; L-leucine from 3-methyl-2-oxobutanoate: step 1/4.</text>
</comment>
<comment type="subunit">
    <text evidence="1">Homodimer.</text>
</comment>
<comment type="subcellular location">
    <subcellularLocation>
        <location evidence="1">Cytoplasm</location>
    </subcellularLocation>
</comment>
<comment type="similarity">
    <text evidence="1">Belongs to the alpha-IPM synthase/homocitrate synthase family. LeuA type 1 subfamily.</text>
</comment>
<accession>Q5PDG1</accession>
<evidence type="ECO:0000255" key="1">
    <source>
        <dbReference type="HAMAP-Rule" id="MF_01025"/>
    </source>
</evidence>
<name>LEU1_SALPA</name>
<feature type="chain" id="PRO_1000149271" description="2-isopropylmalate synthase">
    <location>
        <begin position="1"/>
        <end position="523"/>
    </location>
</feature>
<feature type="domain" description="Pyruvate carboxyltransferase" evidence="1">
    <location>
        <begin position="5"/>
        <end position="267"/>
    </location>
</feature>
<feature type="region of interest" description="Regulatory domain" evidence="1">
    <location>
        <begin position="392"/>
        <end position="523"/>
    </location>
</feature>
<feature type="binding site" evidence="1">
    <location>
        <position position="14"/>
    </location>
    <ligand>
        <name>Mn(2+)</name>
        <dbReference type="ChEBI" id="CHEBI:29035"/>
    </ligand>
</feature>
<feature type="binding site" evidence="1">
    <location>
        <position position="202"/>
    </location>
    <ligand>
        <name>Mn(2+)</name>
        <dbReference type="ChEBI" id="CHEBI:29035"/>
    </ligand>
</feature>
<feature type="binding site" evidence="1">
    <location>
        <position position="204"/>
    </location>
    <ligand>
        <name>Mn(2+)</name>
        <dbReference type="ChEBI" id="CHEBI:29035"/>
    </ligand>
</feature>
<feature type="binding site" evidence="1">
    <location>
        <position position="238"/>
    </location>
    <ligand>
        <name>Mn(2+)</name>
        <dbReference type="ChEBI" id="CHEBI:29035"/>
    </ligand>
</feature>
<dbReference type="EC" id="2.3.3.13" evidence="1"/>
<dbReference type="EMBL" id="CP000026">
    <property type="protein sequence ID" value="AAV76148.1"/>
    <property type="molecule type" value="Genomic_DNA"/>
</dbReference>
<dbReference type="RefSeq" id="WP_000082817.1">
    <property type="nucleotide sequence ID" value="NC_006511.1"/>
</dbReference>
<dbReference type="SMR" id="Q5PDG1"/>
<dbReference type="KEGG" id="spt:SPA0115"/>
<dbReference type="HOGENOM" id="CLU_022158_0_1_6"/>
<dbReference type="UniPathway" id="UPA00048">
    <property type="reaction ID" value="UER00070"/>
</dbReference>
<dbReference type="Proteomes" id="UP000008185">
    <property type="component" value="Chromosome"/>
</dbReference>
<dbReference type="GO" id="GO:0005829">
    <property type="term" value="C:cytosol"/>
    <property type="evidence" value="ECO:0007669"/>
    <property type="project" value="TreeGrafter"/>
</dbReference>
<dbReference type="GO" id="GO:0003852">
    <property type="term" value="F:2-isopropylmalate synthase activity"/>
    <property type="evidence" value="ECO:0007669"/>
    <property type="project" value="UniProtKB-UniRule"/>
</dbReference>
<dbReference type="GO" id="GO:0003985">
    <property type="term" value="F:acetyl-CoA C-acetyltransferase activity"/>
    <property type="evidence" value="ECO:0007669"/>
    <property type="project" value="UniProtKB-UniRule"/>
</dbReference>
<dbReference type="GO" id="GO:0030145">
    <property type="term" value="F:manganese ion binding"/>
    <property type="evidence" value="ECO:0007669"/>
    <property type="project" value="UniProtKB-UniRule"/>
</dbReference>
<dbReference type="GO" id="GO:0009098">
    <property type="term" value="P:L-leucine biosynthetic process"/>
    <property type="evidence" value="ECO:0007669"/>
    <property type="project" value="UniProtKB-UniRule"/>
</dbReference>
<dbReference type="CDD" id="cd07940">
    <property type="entry name" value="DRE_TIM_IPMS"/>
    <property type="match status" value="1"/>
</dbReference>
<dbReference type="FunFam" id="1.10.238.260:FF:000001">
    <property type="entry name" value="2-isopropylmalate synthase"/>
    <property type="match status" value="1"/>
</dbReference>
<dbReference type="FunFam" id="3.20.20.70:FF:000010">
    <property type="entry name" value="2-isopropylmalate synthase"/>
    <property type="match status" value="1"/>
</dbReference>
<dbReference type="FunFam" id="3.30.160.270:FF:000001">
    <property type="entry name" value="2-isopropylmalate synthase"/>
    <property type="match status" value="1"/>
</dbReference>
<dbReference type="Gene3D" id="1.10.238.260">
    <property type="match status" value="1"/>
</dbReference>
<dbReference type="Gene3D" id="3.30.160.270">
    <property type="match status" value="1"/>
</dbReference>
<dbReference type="Gene3D" id="3.20.20.70">
    <property type="entry name" value="Aldolase class I"/>
    <property type="match status" value="1"/>
</dbReference>
<dbReference type="HAMAP" id="MF_01025">
    <property type="entry name" value="LeuA_type1"/>
    <property type="match status" value="1"/>
</dbReference>
<dbReference type="InterPro" id="IPR050073">
    <property type="entry name" value="2-IPM_HCS-like"/>
</dbReference>
<dbReference type="InterPro" id="IPR013709">
    <property type="entry name" value="2-isopropylmalate_synth_dimer"/>
</dbReference>
<dbReference type="InterPro" id="IPR002034">
    <property type="entry name" value="AIPM/Hcit_synth_CS"/>
</dbReference>
<dbReference type="InterPro" id="IPR013785">
    <property type="entry name" value="Aldolase_TIM"/>
</dbReference>
<dbReference type="InterPro" id="IPR054691">
    <property type="entry name" value="LeuA/HCS_post-cat"/>
</dbReference>
<dbReference type="InterPro" id="IPR036230">
    <property type="entry name" value="LeuA_allosteric_dom_sf"/>
</dbReference>
<dbReference type="InterPro" id="IPR005671">
    <property type="entry name" value="LeuA_bact_synth"/>
</dbReference>
<dbReference type="InterPro" id="IPR000891">
    <property type="entry name" value="PYR_CT"/>
</dbReference>
<dbReference type="NCBIfam" id="TIGR00973">
    <property type="entry name" value="leuA_bact"/>
    <property type="match status" value="1"/>
</dbReference>
<dbReference type="NCBIfam" id="NF002084">
    <property type="entry name" value="PRK00915.1-1"/>
    <property type="match status" value="1"/>
</dbReference>
<dbReference type="NCBIfam" id="NF002086">
    <property type="entry name" value="PRK00915.1-3"/>
    <property type="match status" value="1"/>
</dbReference>
<dbReference type="PANTHER" id="PTHR10277:SF9">
    <property type="entry name" value="2-ISOPROPYLMALATE SYNTHASE 1, CHLOROPLASTIC-RELATED"/>
    <property type="match status" value="1"/>
</dbReference>
<dbReference type="PANTHER" id="PTHR10277">
    <property type="entry name" value="HOMOCITRATE SYNTHASE-RELATED"/>
    <property type="match status" value="1"/>
</dbReference>
<dbReference type="Pfam" id="PF22617">
    <property type="entry name" value="HCS_D2"/>
    <property type="match status" value="1"/>
</dbReference>
<dbReference type="Pfam" id="PF00682">
    <property type="entry name" value="HMGL-like"/>
    <property type="match status" value="1"/>
</dbReference>
<dbReference type="Pfam" id="PF08502">
    <property type="entry name" value="LeuA_dimer"/>
    <property type="match status" value="1"/>
</dbReference>
<dbReference type="SMART" id="SM00917">
    <property type="entry name" value="LeuA_dimer"/>
    <property type="match status" value="1"/>
</dbReference>
<dbReference type="SUPFAM" id="SSF110921">
    <property type="entry name" value="2-isopropylmalate synthase LeuA, allosteric (dimerisation) domain"/>
    <property type="match status" value="1"/>
</dbReference>
<dbReference type="SUPFAM" id="SSF51569">
    <property type="entry name" value="Aldolase"/>
    <property type="match status" value="1"/>
</dbReference>
<dbReference type="PROSITE" id="PS00815">
    <property type="entry name" value="AIPM_HOMOCIT_SYNTH_1"/>
    <property type="match status" value="1"/>
</dbReference>
<dbReference type="PROSITE" id="PS00816">
    <property type="entry name" value="AIPM_HOMOCIT_SYNTH_2"/>
    <property type="match status" value="1"/>
</dbReference>
<dbReference type="PROSITE" id="PS50991">
    <property type="entry name" value="PYR_CT"/>
    <property type="match status" value="1"/>
</dbReference>
<keyword id="KW-0028">Amino-acid biosynthesis</keyword>
<keyword id="KW-0100">Branched-chain amino acid biosynthesis</keyword>
<keyword id="KW-0963">Cytoplasm</keyword>
<keyword id="KW-0432">Leucine biosynthesis</keyword>
<keyword id="KW-0464">Manganese</keyword>
<keyword id="KW-0479">Metal-binding</keyword>
<keyword id="KW-0808">Transferase</keyword>